<proteinExistence type="inferred from homology"/>
<reference key="1">
    <citation type="journal article" date="2009" name="Appl. Environ. Microbiol.">
        <title>Genome analysis of the meat starter culture bacterium Staphylococcus carnosus TM300.</title>
        <authorList>
            <person name="Rosenstein R."/>
            <person name="Nerz C."/>
            <person name="Biswas L."/>
            <person name="Resch A."/>
            <person name="Raddatz G."/>
            <person name="Schuster S.C."/>
            <person name="Goetz F."/>
        </authorList>
    </citation>
    <scope>NUCLEOTIDE SEQUENCE [LARGE SCALE GENOMIC DNA]</scope>
    <source>
        <strain>TM300</strain>
    </source>
</reference>
<keyword id="KW-1185">Reference proteome</keyword>
<keyword id="KW-0687">Ribonucleoprotein</keyword>
<keyword id="KW-0689">Ribosomal protein</keyword>
<keyword id="KW-0694">RNA-binding</keyword>
<keyword id="KW-0699">rRNA-binding</keyword>
<keyword id="KW-0820">tRNA-binding</keyword>
<organism>
    <name type="scientific">Staphylococcus carnosus (strain TM300)</name>
    <dbReference type="NCBI Taxonomy" id="396513"/>
    <lineage>
        <taxon>Bacteria</taxon>
        <taxon>Bacillati</taxon>
        <taxon>Bacillota</taxon>
        <taxon>Bacilli</taxon>
        <taxon>Bacillales</taxon>
        <taxon>Staphylococcaceae</taxon>
        <taxon>Staphylococcus</taxon>
    </lineage>
</organism>
<dbReference type="EMBL" id="AM295250">
    <property type="protein sequence ID" value="CAL28617.1"/>
    <property type="molecule type" value="Genomic_DNA"/>
</dbReference>
<dbReference type="RefSeq" id="WP_015900957.1">
    <property type="nucleotide sequence ID" value="NC_012121.1"/>
</dbReference>
<dbReference type="SMR" id="B9DM53"/>
<dbReference type="GeneID" id="93794170"/>
<dbReference type="KEGG" id="sca:SCA_1711"/>
<dbReference type="eggNOG" id="COG0099">
    <property type="taxonomic scope" value="Bacteria"/>
</dbReference>
<dbReference type="HOGENOM" id="CLU_103849_1_1_9"/>
<dbReference type="OrthoDB" id="9803610at2"/>
<dbReference type="BioCyc" id="SCAR396513:SCA_RS08720-MONOMER"/>
<dbReference type="Proteomes" id="UP000000444">
    <property type="component" value="Chromosome"/>
</dbReference>
<dbReference type="GO" id="GO:0005829">
    <property type="term" value="C:cytosol"/>
    <property type="evidence" value="ECO:0007669"/>
    <property type="project" value="TreeGrafter"/>
</dbReference>
<dbReference type="GO" id="GO:0015935">
    <property type="term" value="C:small ribosomal subunit"/>
    <property type="evidence" value="ECO:0007669"/>
    <property type="project" value="TreeGrafter"/>
</dbReference>
<dbReference type="GO" id="GO:0019843">
    <property type="term" value="F:rRNA binding"/>
    <property type="evidence" value="ECO:0007669"/>
    <property type="project" value="UniProtKB-UniRule"/>
</dbReference>
<dbReference type="GO" id="GO:0003735">
    <property type="term" value="F:structural constituent of ribosome"/>
    <property type="evidence" value="ECO:0007669"/>
    <property type="project" value="InterPro"/>
</dbReference>
<dbReference type="GO" id="GO:0000049">
    <property type="term" value="F:tRNA binding"/>
    <property type="evidence" value="ECO:0007669"/>
    <property type="project" value="UniProtKB-UniRule"/>
</dbReference>
<dbReference type="GO" id="GO:0006412">
    <property type="term" value="P:translation"/>
    <property type="evidence" value="ECO:0007669"/>
    <property type="project" value="UniProtKB-UniRule"/>
</dbReference>
<dbReference type="FunFam" id="1.10.8.50:FF:000001">
    <property type="entry name" value="30S ribosomal protein S13"/>
    <property type="match status" value="1"/>
</dbReference>
<dbReference type="FunFam" id="4.10.910.10:FF:000001">
    <property type="entry name" value="30S ribosomal protein S13"/>
    <property type="match status" value="1"/>
</dbReference>
<dbReference type="Gene3D" id="1.10.8.50">
    <property type="match status" value="1"/>
</dbReference>
<dbReference type="Gene3D" id="4.10.910.10">
    <property type="entry name" value="30s ribosomal protein s13, domain 2"/>
    <property type="match status" value="1"/>
</dbReference>
<dbReference type="HAMAP" id="MF_01315">
    <property type="entry name" value="Ribosomal_uS13"/>
    <property type="match status" value="1"/>
</dbReference>
<dbReference type="InterPro" id="IPR027437">
    <property type="entry name" value="Rbsml_uS13_C"/>
</dbReference>
<dbReference type="InterPro" id="IPR001892">
    <property type="entry name" value="Ribosomal_uS13"/>
</dbReference>
<dbReference type="InterPro" id="IPR010979">
    <property type="entry name" value="Ribosomal_uS13-like_H2TH"/>
</dbReference>
<dbReference type="InterPro" id="IPR019980">
    <property type="entry name" value="Ribosomal_uS13_bac-type"/>
</dbReference>
<dbReference type="InterPro" id="IPR018269">
    <property type="entry name" value="Ribosomal_uS13_CS"/>
</dbReference>
<dbReference type="NCBIfam" id="TIGR03631">
    <property type="entry name" value="uS13_bact"/>
    <property type="match status" value="1"/>
</dbReference>
<dbReference type="PANTHER" id="PTHR10871">
    <property type="entry name" value="30S RIBOSOMAL PROTEIN S13/40S RIBOSOMAL PROTEIN S18"/>
    <property type="match status" value="1"/>
</dbReference>
<dbReference type="PANTHER" id="PTHR10871:SF1">
    <property type="entry name" value="SMALL RIBOSOMAL SUBUNIT PROTEIN US13M"/>
    <property type="match status" value="1"/>
</dbReference>
<dbReference type="Pfam" id="PF00416">
    <property type="entry name" value="Ribosomal_S13"/>
    <property type="match status" value="1"/>
</dbReference>
<dbReference type="PIRSF" id="PIRSF002134">
    <property type="entry name" value="Ribosomal_S13"/>
    <property type="match status" value="1"/>
</dbReference>
<dbReference type="SUPFAM" id="SSF46946">
    <property type="entry name" value="S13-like H2TH domain"/>
    <property type="match status" value="1"/>
</dbReference>
<dbReference type="PROSITE" id="PS00646">
    <property type="entry name" value="RIBOSOMAL_S13_1"/>
    <property type="match status" value="1"/>
</dbReference>
<dbReference type="PROSITE" id="PS50159">
    <property type="entry name" value="RIBOSOMAL_S13_2"/>
    <property type="match status" value="1"/>
</dbReference>
<comment type="function">
    <text evidence="1">Located at the top of the head of the 30S subunit, it contacts several helices of the 16S rRNA. In the 70S ribosome it contacts the 23S rRNA (bridge B1a) and protein L5 of the 50S subunit (bridge B1b), connecting the 2 subunits; these bridges are implicated in subunit movement. Contacts the tRNAs in the A and P-sites.</text>
</comment>
<comment type="subunit">
    <text evidence="1">Part of the 30S ribosomal subunit. Forms a loose heterodimer with protein S19. Forms two bridges to the 50S subunit in the 70S ribosome.</text>
</comment>
<comment type="similarity">
    <text evidence="1">Belongs to the universal ribosomal protein uS13 family.</text>
</comment>
<sequence>MARIAGIDIPREKRVVISLTYIYGVGKSTAAKILEEANVSPDTRVKDLTDDELGRIRETVDAYKVEGDLRREQNLNIKRLMEISSYRGIRHRRGLPVRGQKTKNNARTRKGPVKTVANKKK</sequence>
<feature type="chain" id="PRO_1000165637" description="Small ribosomal subunit protein uS13">
    <location>
        <begin position="1"/>
        <end position="121"/>
    </location>
</feature>
<feature type="region of interest" description="Disordered" evidence="2">
    <location>
        <begin position="91"/>
        <end position="121"/>
    </location>
</feature>
<gene>
    <name evidence="1" type="primary">rpsM</name>
    <name type="ordered locus">Sca_1711</name>
</gene>
<protein>
    <recommendedName>
        <fullName evidence="1">Small ribosomal subunit protein uS13</fullName>
    </recommendedName>
    <alternativeName>
        <fullName evidence="3">30S ribosomal protein S13</fullName>
    </alternativeName>
</protein>
<name>RS13_STACT</name>
<accession>B9DM53</accession>
<evidence type="ECO:0000255" key="1">
    <source>
        <dbReference type="HAMAP-Rule" id="MF_01315"/>
    </source>
</evidence>
<evidence type="ECO:0000256" key="2">
    <source>
        <dbReference type="SAM" id="MobiDB-lite"/>
    </source>
</evidence>
<evidence type="ECO:0000305" key="3"/>